<proteinExistence type="inferred from homology"/>
<name>HIS4_STAS1</name>
<reference key="1">
    <citation type="journal article" date="2005" name="Proc. Natl. Acad. Sci. U.S.A.">
        <title>Whole genome sequence of Staphylococcus saprophyticus reveals the pathogenesis of uncomplicated urinary tract infection.</title>
        <authorList>
            <person name="Kuroda M."/>
            <person name="Yamashita A."/>
            <person name="Hirakawa H."/>
            <person name="Kumano M."/>
            <person name="Morikawa K."/>
            <person name="Higashide M."/>
            <person name="Maruyama A."/>
            <person name="Inose Y."/>
            <person name="Matoba K."/>
            <person name="Toh H."/>
            <person name="Kuhara S."/>
            <person name="Hattori M."/>
            <person name="Ohta T."/>
        </authorList>
    </citation>
    <scope>NUCLEOTIDE SEQUENCE [LARGE SCALE GENOMIC DNA]</scope>
    <source>
        <strain>ATCC 15305 / DSM 20229 / NCIMB 8711 / NCTC 7292 / S-41</strain>
    </source>
</reference>
<comment type="catalytic activity">
    <reaction evidence="1">
        <text>1-(5-phospho-beta-D-ribosyl)-5-[(5-phospho-beta-D-ribosylamino)methylideneamino]imidazole-4-carboxamide = 5-[(5-phospho-1-deoxy-D-ribulos-1-ylimino)methylamino]-1-(5-phospho-beta-D-ribosyl)imidazole-4-carboxamide</text>
        <dbReference type="Rhea" id="RHEA:15469"/>
        <dbReference type="ChEBI" id="CHEBI:58435"/>
        <dbReference type="ChEBI" id="CHEBI:58525"/>
        <dbReference type="EC" id="5.3.1.16"/>
    </reaction>
</comment>
<comment type="pathway">
    <text evidence="1">Amino-acid biosynthesis; L-histidine biosynthesis; L-histidine from 5-phospho-alpha-D-ribose 1-diphosphate: step 4/9.</text>
</comment>
<comment type="subcellular location">
    <subcellularLocation>
        <location evidence="1">Cytoplasm</location>
    </subcellularLocation>
</comment>
<comment type="similarity">
    <text evidence="1">Belongs to the HisA/HisF family.</text>
</comment>
<gene>
    <name evidence="1" type="primary">hisA</name>
    <name type="ordered locus">SSP0425</name>
</gene>
<protein>
    <recommendedName>
        <fullName evidence="1">1-(5-phosphoribosyl)-5-[(5-phosphoribosylamino)methylideneamino] imidazole-4-carboxamide isomerase</fullName>
        <ecNumber evidence="1">5.3.1.16</ecNumber>
    </recommendedName>
    <alternativeName>
        <fullName evidence="1">Phosphoribosylformimino-5-aminoimidazole carboxamide ribotide isomerase</fullName>
    </alternativeName>
</protein>
<sequence length="234" mass="26159">MIKLWPAIDLINATSVRLTEGKYDSEVKMARSAEESVLFYNQYQCVDRIHIVDLIGAKNQVSIESDYINQLRSLTDKPMEVGGGIRDRNTIDTYFNNGIDYCIIGTKGIEDLAWLSHMTQAFPNRLYLSIDAYRRQVKINGWEEDAGLDIFDLLQQVESLPLGGIIYTDISKDGKLEGPNFEITQQLVQATQKPIIASGGIRHQQDLAQLESIGVHAAIVGKAAHNATFWEGLS</sequence>
<keyword id="KW-0028">Amino-acid biosynthesis</keyword>
<keyword id="KW-0963">Cytoplasm</keyword>
<keyword id="KW-0368">Histidine biosynthesis</keyword>
<keyword id="KW-0413">Isomerase</keyword>
<keyword id="KW-1185">Reference proteome</keyword>
<dbReference type="EC" id="5.3.1.16" evidence="1"/>
<dbReference type="EMBL" id="AP008934">
    <property type="protein sequence ID" value="BAE17570.1"/>
    <property type="molecule type" value="Genomic_DNA"/>
</dbReference>
<dbReference type="RefSeq" id="WP_011302393.1">
    <property type="nucleotide sequence ID" value="NZ_MTGA01000036.1"/>
</dbReference>
<dbReference type="SMR" id="Q4A048"/>
<dbReference type="GeneID" id="3616173"/>
<dbReference type="KEGG" id="ssp:SSP0425"/>
<dbReference type="PATRIC" id="fig|342451.11.peg.430"/>
<dbReference type="eggNOG" id="COG0106">
    <property type="taxonomic scope" value="Bacteria"/>
</dbReference>
<dbReference type="HOGENOM" id="CLU_048577_1_2_9"/>
<dbReference type="OrthoDB" id="9807749at2"/>
<dbReference type="UniPathway" id="UPA00031">
    <property type="reaction ID" value="UER00009"/>
</dbReference>
<dbReference type="Proteomes" id="UP000006371">
    <property type="component" value="Chromosome"/>
</dbReference>
<dbReference type="GO" id="GO:0005737">
    <property type="term" value="C:cytoplasm"/>
    <property type="evidence" value="ECO:0007669"/>
    <property type="project" value="UniProtKB-SubCell"/>
</dbReference>
<dbReference type="GO" id="GO:0003949">
    <property type="term" value="F:1-(5-phosphoribosyl)-5-[(5-phosphoribosylamino)methylideneamino]imidazole-4-carboxamide isomerase activity"/>
    <property type="evidence" value="ECO:0007669"/>
    <property type="project" value="UniProtKB-UniRule"/>
</dbReference>
<dbReference type="GO" id="GO:0000105">
    <property type="term" value="P:L-histidine biosynthetic process"/>
    <property type="evidence" value="ECO:0007669"/>
    <property type="project" value="UniProtKB-UniRule"/>
</dbReference>
<dbReference type="GO" id="GO:0000162">
    <property type="term" value="P:L-tryptophan biosynthetic process"/>
    <property type="evidence" value="ECO:0007669"/>
    <property type="project" value="TreeGrafter"/>
</dbReference>
<dbReference type="CDD" id="cd04732">
    <property type="entry name" value="HisA"/>
    <property type="match status" value="1"/>
</dbReference>
<dbReference type="Gene3D" id="3.20.20.70">
    <property type="entry name" value="Aldolase class I"/>
    <property type="match status" value="1"/>
</dbReference>
<dbReference type="HAMAP" id="MF_01014">
    <property type="entry name" value="HisA"/>
    <property type="match status" value="1"/>
</dbReference>
<dbReference type="InterPro" id="IPR013785">
    <property type="entry name" value="Aldolase_TIM"/>
</dbReference>
<dbReference type="InterPro" id="IPR006062">
    <property type="entry name" value="His_biosynth"/>
</dbReference>
<dbReference type="InterPro" id="IPR006063">
    <property type="entry name" value="HisA_bact_arch"/>
</dbReference>
<dbReference type="InterPro" id="IPR044524">
    <property type="entry name" value="Isoase_HisA-like"/>
</dbReference>
<dbReference type="InterPro" id="IPR023016">
    <property type="entry name" value="Isoase_HisA-like_bact"/>
</dbReference>
<dbReference type="InterPro" id="IPR011060">
    <property type="entry name" value="RibuloseP-bd_barrel"/>
</dbReference>
<dbReference type="NCBIfam" id="TIGR00007">
    <property type="entry name" value="1-(5-phosphoribosyl)-5-[(5-phosphoribosylamino)methylideneamino]imidazole-4-carboxamide isomerase"/>
    <property type="match status" value="1"/>
</dbReference>
<dbReference type="NCBIfam" id="NF010114">
    <property type="entry name" value="PRK13587.1"/>
    <property type="match status" value="1"/>
</dbReference>
<dbReference type="PANTHER" id="PTHR43090">
    <property type="entry name" value="1-(5-PHOSPHORIBOSYL)-5-[(5-PHOSPHORIBOSYLAMINO)METHYLIDENEAMINO] IMIDAZOLE-4-CARBOXAMIDE ISOMERASE"/>
    <property type="match status" value="1"/>
</dbReference>
<dbReference type="PANTHER" id="PTHR43090:SF2">
    <property type="entry name" value="1-(5-PHOSPHORIBOSYL)-5-[(5-PHOSPHORIBOSYLAMINO)METHYLIDENEAMINO] IMIDAZOLE-4-CARBOXAMIDE ISOMERASE"/>
    <property type="match status" value="1"/>
</dbReference>
<dbReference type="Pfam" id="PF00977">
    <property type="entry name" value="His_biosynth"/>
    <property type="match status" value="1"/>
</dbReference>
<dbReference type="SUPFAM" id="SSF51366">
    <property type="entry name" value="Ribulose-phoshate binding barrel"/>
    <property type="match status" value="1"/>
</dbReference>
<organism>
    <name type="scientific">Staphylococcus saprophyticus subsp. saprophyticus (strain ATCC 15305 / DSM 20229 / NCIMB 8711 / NCTC 7292 / S-41)</name>
    <dbReference type="NCBI Taxonomy" id="342451"/>
    <lineage>
        <taxon>Bacteria</taxon>
        <taxon>Bacillati</taxon>
        <taxon>Bacillota</taxon>
        <taxon>Bacilli</taxon>
        <taxon>Bacillales</taxon>
        <taxon>Staphylococcaceae</taxon>
        <taxon>Staphylococcus</taxon>
    </lineage>
</organism>
<evidence type="ECO:0000255" key="1">
    <source>
        <dbReference type="HAMAP-Rule" id="MF_01014"/>
    </source>
</evidence>
<feature type="chain" id="PRO_0000142060" description="1-(5-phosphoribosyl)-5-[(5-phosphoribosylamino)methylideneamino] imidazole-4-carboxamide isomerase">
    <location>
        <begin position="1"/>
        <end position="234"/>
    </location>
</feature>
<feature type="active site" description="Proton acceptor" evidence="1">
    <location>
        <position position="9"/>
    </location>
</feature>
<feature type="active site" description="Proton donor" evidence="1">
    <location>
        <position position="131"/>
    </location>
</feature>
<accession>Q4A048</accession>